<dbReference type="EC" id="5.6.1.7" evidence="1"/>
<dbReference type="EMBL" id="CP000409">
    <property type="protein sequence ID" value="ABV73269.1"/>
    <property type="molecule type" value="Genomic_DNA"/>
</dbReference>
<dbReference type="RefSeq" id="WP_012148468.1">
    <property type="nucleotide sequence ID" value="NC_009879.1"/>
</dbReference>
<dbReference type="SMR" id="A8EY36"/>
<dbReference type="STRING" id="293613.A1E_01620"/>
<dbReference type="KEGG" id="rcm:A1E_01620"/>
<dbReference type="eggNOG" id="COG0459">
    <property type="taxonomic scope" value="Bacteria"/>
</dbReference>
<dbReference type="HOGENOM" id="CLU_016503_3_0_5"/>
<dbReference type="Proteomes" id="UP000007056">
    <property type="component" value="Chromosome"/>
</dbReference>
<dbReference type="GO" id="GO:0005737">
    <property type="term" value="C:cytoplasm"/>
    <property type="evidence" value="ECO:0007669"/>
    <property type="project" value="UniProtKB-SubCell"/>
</dbReference>
<dbReference type="GO" id="GO:0005524">
    <property type="term" value="F:ATP binding"/>
    <property type="evidence" value="ECO:0007669"/>
    <property type="project" value="UniProtKB-UniRule"/>
</dbReference>
<dbReference type="GO" id="GO:0140662">
    <property type="term" value="F:ATP-dependent protein folding chaperone"/>
    <property type="evidence" value="ECO:0007669"/>
    <property type="project" value="InterPro"/>
</dbReference>
<dbReference type="GO" id="GO:0016853">
    <property type="term" value="F:isomerase activity"/>
    <property type="evidence" value="ECO:0007669"/>
    <property type="project" value="UniProtKB-KW"/>
</dbReference>
<dbReference type="GO" id="GO:0051082">
    <property type="term" value="F:unfolded protein binding"/>
    <property type="evidence" value="ECO:0007669"/>
    <property type="project" value="UniProtKB-UniRule"/>
</dbReference>
<dbReference type="GO" id="GO:0042026">
    <property type="term" value="P:protein refolding"/>
    <property type="evidence" value="ECO:0007669"/>
    <property type="project" value="UniProtKB-UniRule"/>
</dbReference>
<dbReference type="CDD" id="cd03344">
    <property type="entry name" value="GroEL"/>
    <property type="match status" value="1"/>
</dbReference>
<dbReference type="FunFam" id="3.50.7.10:FF:000001">
    <property type="entry name" value="60 kDa chaperonin"/>
    <property type="match status" value="1"/>
</dbReference>
<dbReference type="Gene3D" id="3.50.7.10">
    <property type="entry name" value="GroEL"/>
    <property type="match status" value="1"/>
</dbReference>
<dbReference type="Gene3D" id="1.10.560.10">
    <property type="entry name" value="GroEL-like equatorial domain"/>
    <property type="match status" value="1"/>
</dbReference>
<dbReference type="Gene3D" id="3.30.260.10">
    <property type="entry name" value="TCP-1-like chaperonin intermediate domain"/>
    <property type="match status" value="1"/>
</dbReference>
<dbReference type="HAMAP" id="MF_00600">
    <property type="entry name" value="CH60"/>
    <property type="match status" value="1"/>
</dbReference>
<dbReference type="InterPro" id="IPR018370">
    <property type="entry name" value="Chaperonin_Cpn60_CS"/>
</dbReference>
<dbReference type="InterPro" id="IPR001844">
    <property type="entry name" value="Cpn60/GroEL"/>
</dbReference>
<dbReference type="InterPro" id="IPR002423">
    <property type="entry name" value="Cpn60/GroEL/TCP-1"/>
</dbReference>
<dbReference type="InterPro" id="IPR027409">
    <property type="entry name" value="GroEL-like_apical_dom_sf"/>
</dbReference>
<dbReference type="InterPro" id="IPR027413">
    <property type="entry name" value="GROEL-like_equatorial_sf"/>
</dbReference>
<dbReference type="InterPro" id="IPR027410">
    <property type="entry name" value="TCP-1-like_intermed_sf"/>
</dbReference>
<dbReference type="NCBIfam" id="TIGR02348">
    <property type="entry name" value="GroEL"/>
    <property type="match status" value="1"/>
</dbReference>
<dbReference type="NCBIfam" id="NF000592">
    <property type="entry name" value="PRK00013.1"/>
    <property type="match status" value="1"/>
</dbReference>
<dbReference type="NCBIfam" id="NF009487">
    <property type="entry name" value="PRK12849.1"/>
    <property type="match status" value="1"/>
</dbReference>
<dbReference type="NCBIfam" id="NF009488">
    <property type="entry name" value="PRK12850.1"/>
    <property type="match status" value="1"/>
</dbReference>
<dbReference type="NCBIfam" id="NF009489">
    <property type="entry name" value="PRK12851.1"/>
    <property type="match status" value="1"/>
</dbReference>
<dbReference type="PANTHER" id="PTHR45633">
    <property type="entry name" value="60 KDA HEAT SHOCK PROTEIN, MITOCHONDRIAL"/>
    <property type="match status" value="1"/>
</dbReference>
<dbReference type="Pfam" id="PF00118">
    <property type="entry name" value="Cpn60_TCP1"/>
    <property type="match status" value="1"/>
</dbReference>
<dbReference type="PRINTS" id="PR00298">
    <property type="entry name" value="CHAPERONIN60"/>
</dbReference>
<dbReference type="SUPFAM" id="SSF52029">
    <property type="entry name" value="GroEL apical domain-like"/>
    <property type="match status" value="1"/>
</dbReference>
<dbReference type="SUPFAM" id="SSF48592">
    <property type="entry name" value="GroEL equatorial domain-like"/>
    <property type="match status" value="1"/>
</dbReference>
<dbReference type="SUPFAM" id="SSF54849">
    <property type="entry name" value="GroEL-intermediate domain like"/>
    <property type="match status" value="1"/>
</dbReference>
<dbReference type="PROSITE" id="PS00296">
    <property type="entry name" value="CHAPERONINS_CPN60"/>
    <property type="match status" value="1"/>
</dbReference>
<keyword id="KW-0067">ATP-binding</keyword>
<keyword id="KW-0143">Chaperone</keyword>
<keyword id="KW-0963">Cytoplasm</keyword>
<keyword id="KW-0413">Isomerase</keyword>
<keyword id="KW-0547">Nucleotide-binding</keyword>
<protein>
    <recommendedName>
        <fullName evidence="1">Chaperonin GroEL</fullName>
        <ecNumber evidence="1">5.6.1.7</ecNumber>
    </recommendedName>
    <alternativeName>
        <fullName evidence="1">60 kDa chaperonin</fullName>
    </alternativeName>
    <alternativeName>
        <fullName evidence="1">Chaperonin-60</fullName>
        <shortName evidence="1">Cpn60</shortName>
    </alternativeName>
</protein>
<evidence type="ECO:0000255" key="1">
    <source>
        <dbReference type="HAMAP-Rule" id="MF_00600"/>
    </source>
</evidence>
<evidence type="ECO:0000256" key="2">
    <source>
        <dbReference type="SAM" id="MobiDB-lite"/>
    </source>
</evidence>
<organism>
    <name type="scientific">Rickettsia canadensis (strain McKiel)</name>
    <dbReference type="NCBI Taxonomy" id="293613"/>
    <lineage>
        <taxon>Bacteria</taxon>
        <taxon>Pseudomonadati</taxon>
        <taxon>Pseudomonadota</taxon>
        <taxon>Alphaproteobacteria</taxon>
        <taxon>Rickettsiales</taxon>
        <taxon>Rickettsiaceae</taxon>
        <taxon>Rickettsieae</taxon>
        <taxon>Rickettsia</taxon>
        <taxon>belli group</taxon>
    </lineage>
</organism>
<gene>
    <name evidence="1" type="primary">groEL</name>
    <name evidence="1" type="synonym">groL</name>
    <name type="ordered locus">A1E_01620</name>
</gene>
<sequence>MATKLIKHGSEAREEMLKGVDILANAVKVTLGPKGRNVLIEQSFGAPKITKDGVTVAKSIELKEKIRNAGAQLLKSAATKAAEVAGDGTTTATVLARALAREGNKLVAAGYNPMDLKRGMDLAVNTVVEEIKKSSKKINSQEEIAQVGTISSNGDKEIGEKIAKAMEEVGKEGVITVEEAKNFSFDVEVVKGMMFDRGYLSPYFVTNSEKMVAELENPFILLFEKKLSNLQPMLPILEAVVQSQRPLLIIAEDVEGEALATLVVNRLRGGLKVAAVKAPGFGDRRKAMMEDIAILTKGELITEDLGMKLENVSIKSLGTAKRVTISKENTVIVDGSGDKKSIEDRVLQIKSQIAETTSDYDKEKLQERLAKLSGGVAVLKVGGATEVEVKERKDRVEDALAATRAAVEEGVVAGGGVTLLHTSQILTKLKVENKDQQAGIEIVIEALKDPLKQIVENAGENGGVVVGKLLEHKDKNFGFNAQDMQYVDMIQAGIIDPAKVVRTALQDAASVASLIITTETLIVDEPSKEEPMPMRGSGMGGMGGMDF</sequence>
<accession>A8EY36</accession>
<proteinExistence type="inferred from homology"/>
<comment type="function">
    <text evidence="1">Together with its co-chaperonin GroES, plays an essential role in assisting protein folding. The GroEL-GroES system forms a nano-cage that allows encapsulation of the non-native substrate proteins and provides a physical environment optimized to promote and accelerate protein folding.</text>
</comment>
<comment type="catalytic activity">
    <reaction evidence="1">
        <text>ATP + H2O + a folded polypeptide = ADP + phosphate + an unfolded polypeptide.</text>
        <dbReference type="EC" id="5.6.1.7"/>
    </reaction>
</comment>
<comment type="subunit">
    <text evidence="1">Forms a cylinder of 14 subunits composed of two heptameric rings stacked back-to-back. Interacts with the co-chaperonin GroES.</text>
</comment>
<comment type="subcellular location">
    <subcellularLocation>
        <location evidence="1">Cytoplasm</location>
    </subcellularLocation>
</comment>
<comment type="similarity">
    <text evidence="1">Belongs to the chaperonin (HSP60) family.</text>
</comment>
<reference key="1">
    <citation type="submission" date="2007-09" db="EMBL/GenBank/DDBJ databases">
        <title>Complete genome sequence of Rickettsia canadensis.</title>
        <authorList>
            <person name="Madan A."/>
            <person name="Fahey J."/>
            <person name="Helton E."/>
            <person name="Ketteman M."/>
            <person name="Madan A."/>
            <person name="Rodrigues S."/>
            <person name="Sanchez A."/>
            <person name="Whiting M."/>
            <person name="Dasch G."/>
            <person name="Eremeeva M."/>
        </authorList>
    </citation>
    <scope>NUCLEOTIDE SEQUENCE [LARGE SCALE GENOMIC DNA]</scope>
    <source>
        <strain>McKiel</strain>
    </source>
</reference>
<name>CH60_RICCK</name>
<feature type="chain" id="PRO_1000025829" description="Chaperonin GroEL">
    <location>
        <begin position="1"/>
        <end position="547"/>
    </location>
</feature>
<feature type="region of interest" description="Disordered" evidence="2">
    <location>
        <begin position="528"/>
        <end position="547"/>
    </location>
</feature>
<feature type="compositionally biased region" description="Gly residues" evidence="2">
    <location>
        <begin position="537"/>
        <end position="547"/>
    </location>
</feature>
<feature type="binding site" evidence="1">
    <location>
        <begin position="30"/>
        <end position="33"/>
    </location>
    <ligand>
        <name>ATP</name>
        <dbReference type="ChEBI" id="CHEBI:30616"/>
    </ligand>
</feature>
<feature type="binding site" evidence="1">
    <location>
        <position position="51"/>
    </location>
    <ligand>
        <name>ATP</name>
        <dbReference type="ChEBI" id="CHEBI:30616"/>
    </ligand>
</feature>
<feature type="binding site" evidence="1">
    <location>
        <begin position="87"/>
        <end position="91"/>
    </location>
    <ligand>
        <name>ATP</name>
        <dbReference type="ChEBI" id="CHEBI:30616"/>
    </ligand>
</feature>
<feature type="binding site" evidence="1">
    <location>
        <position position="415"/>
    </location>
    <ligand>
        <name>ATP</name>
        <dbReference type="ChEBI" id="CHEBI:30616"/>
    </ligand>
</feature>
<feature type="binding site" evidence="1">
    <location>
        <position position="496"/>
    </location>
    <ligand>
        <name>ATP</name>
        <dbReference type="ChEBI" id="CHEBI:30616"/>
    </ligand>
</feature>